<gene>
    <name evidence="1" type="primary">rpsT</name>
    <name type="ordered locus">Pnec_1471</name>
</gene>
<reference key="1">
    <citation type="journal article" date="2013" name="Proc. Natl. Acad. Sci. U.S.A.">
        <title>Polynucleobacter necessarius, a model for genome reduction in both free-living and symbiotic bacteria.</title>
        <authorList>
            <person name="Boscaro V."/>
            <person name="Felletti M."/>
            <person name="Vannini C."/>
            <person name="Ackerman M.S."/>
            <person name="Chain P.S."/>
            <person name="Malfatti S."/>
            <person name="Vergez L.M."/>
            <person name="Shin M."/>
            <person name="Doak T.G."/>
            <person name="Lynch M."/>
            <person name="Petroni G."/>
        </authorList>
    </citation>
    <scope>NUCLEOTIDE SEQUENCE [LARGE SCALE GENOMIC DNA]</scope>
    <source>
        <strain>STIR1</strain>
    </source>
</reference>
<feature type="chain" id="PRO_1000126492" description="Small ribosomal subunit protein bS20">
    <location>
        <begin position="1"/>
        <end position="88"/>
    </location>
</feature>
<feature type="region of interest" description="Disordered" evidence="2">
    <location>
        <begin position="1"/>
        <end position="28"/>
    </location>
</feature>
<name>RS20_POLNS</name>
<keyword id="KW-0687">Ribonucleoprotein</keyword>
<keyword id="KW-0689">Ribosomal protein</keyword>
<keyword id="KW-0694">RNA-binding</keyword>
<keyword id="KW-0699">rRNA-binding</keyword>
<proteinExistence type="inferred from homology"/>
<dbReference type="EMBL" id="CP001010">
    <property type="protein sequence ID" value="ACB44564.1"/>
    <property type="molecule type" value="Genomic_DNA"/>
</dbReference>
<dbReference type="SMR" id="B1XRS9"/>
<dbReference type="STRING" id="452638.Pnec_1471"/>
<dbReference type="KEGG" id="pne:Pnec_1471"/>
<dbReference type="eggNOG" id="COG0268">
    <property type="taxonomic scope" value="Bacteria"/>
</dbReference>
<dbReference type="HOGENOM" id="CLU_160655_4_0_4"/>
<dbReference type="OrthoDB" id="9807974at2"/>
<dbReference type="GO" id="GO:0005829">
    <property type="term" value="C:cytosol"/>
    <property type="evidence" value="ECO:0007669"/>
    <property type="project" value="TreeGrafter"/>
</dbReference>
<dbReference type="GO" id="GO:0015935">
    <property type="term" value="C:small ribosomal subunit"/>
    <property type="evidence" value="ECO:0007669"/>
    <property type="project" value="TreeGrafter"/>
</dbReference>
<dbReference type="GO" id="GO:0070181">
    <property type="term" value="F:small ribosomal subunit rRNA binding"/>
    <property type="evidence" value="ECO:0007669"/>
    <property type="project" value="TreeGrafter"/>
</dbReference>
<dbReference type="GO" id="GO:0003735">
    <property type="term" value="F:structural constituent of ribosome"/>
    <property type="evidence" value="ECO:0007669"/>
    <property type="project" value="InterPro"/>
</dbReference>
<dbReference type="GO" id="GO:0006412">
    <property type="term" value="P:translation"/>
    <property type="evidence" value="ECO:0007669"/>
    <property type="project" value="UniProtKB-UniRule"/>
</dbReference>
<dbReference type="FunFam" id="1.20.58.110:FF:000001">
    <property type="entry name" value="30S ribosomal protein S20"/>
    <property type="match status" value="1"/>
</dbReference>
<dbReference type="Gene3D" id="1.20.58.110">
    <property type="entry name" value="Ribosomal protein S20"/>
    <property type="match status" value="1"/>
</dbReference>
<dbReference type="HAMAP" id="MF_00500">
    <property type="entry name" value="Ribosomal_bS20"/>
    <property type="match status" value="1"/>
</dbReference>
<dbReference type="InterPro" id="IPR002583">
    <property type="entry name" value="Ribosomal_bS20"/>
</dbReference>
<dbReference type="InterPro" id="IPR036510">
    <property type="entry name" value="Ribosomal_bS20_sf"/>
</dbReference>
<dbReference type="NCBIfam" id="TIGR00029">
    <property type="entry name" value="S20"/>
    <property type="match status" value="1"/>
</dbReference>
<dbReference type="PANTHER" id="PTHR33398">
    <property type="entry name" value="30S RIBOSOMAL PROTEIN S20"/>
    <property type="match status" value="1"/>
</dbReference>
<dbReference type="PANTHER" id="PTHR33398:SF1">
    <property type="entry name" value="SMALL RIBOSOMAL SUBUNIT PROTEIN BS20C"/>
    <property type="match status" value="1"/>
</dbReference>
<dbReference type="Pfam" id="PF01649">
    <property type="entry name" value="Ribosomal_S20p"/>
    <property type="match status" value="1"/>
</dbReference>
<dbReference type="SUPFAM" id="SSF46992">
    <property type="entry name" value="Ribosomal protein S20"/>
    <property type="match status" value="1"/>
</dbReference>
<sequence length="88" mass="9469">MANTVQARKRARQAVKQNEHNSSLRSKLRTSIKAVRKAIEAGDKAAAAKVFAATQSTIDKIADKKIAHKNTAARQKSRLSAAIKAMAA</sequence>
<accession>B1XRS9</accession>
<comment type="function">
    <text evidence="1">Binds directly to 16S ribosomal RNA.</text>
</comment>
<comment type="similarity">
    <text evidence="1">Belongs to the bacterial ribosomal protein bS20 family.</text>
</comment>
<evidence type="ECO:0000255" key="1">
    <source>
        <dbReference type="HAMAP-Rule" id="MF_00500"/>
    </source>
</evidence>
<evidence type="ECO:0000256" key="2">
    <source>
        <dbReference type="SAM" id="MobiDB-lite"/>
    </source>
</evidence>
<evidence type="ECO:0000305" key="3"/>
<protein>
    <recommendedName>
        <fullName evidence="1">Small ribosomal subunit protein bS20</fullName>
    </recommendedName>
    <alternativeName>
        <fullName evidence="3">30S ribosomal protein S20</fullName>
    </alternativeName>
</protein>
<organism>
    <name type="scientific">Polynucleobacter necessarius subsp. necessarius (strain STIR1)</name>
    <dbReference type="NCBI Taxonomy" id="452638"/>
    <lineage>
        <taxon>Bacteria</taxon>
        <taxon>Pseudomonadati</taxon>
        <taxon>Pseudomonadota</taxon>
        <taxon>Betaproteobacteria</taxon>
        <taxon>Burkholderiales</taxon>
        <taxon>Burkholderiaceae</taxon>
        <taxon>Polynucleobacter</taxon>
    </lineage>
</organism>